<sequence>MSEMVNVHGWMEEALSSQDEMKERNQSAYDIISGLCHEERGSIDGEEDDEEEEDGEKPKKRGPKKKKMTKARVERFRVRRVKANARERSRMHGLNDALENLRRVMPCYSKTQKLSKIETLRLARNYIWALSDILEQGQNAEGKGFLEILCKGLSQPTSNLVAGCLQLGPQAMFLDKHEEKSHICDSSLTGHTYNYQSPGLPSPPYGNIDVHHLHLKPSSFKPVMDPSVVTHTLNCTTPPYEGALTPPLSIGGNFSLKQDSSPDMDKSYAFRSPYPALGLGGSHGHASHFHTSVPRYELPIDMAYEPYPHHAIFTE</sequence>
<comment type="function">
    <text evidence="1 6">Probably acts as a transcriptional activator. Mediates neuronal differentiation. Required for the regulation of amacrine cell fate specification in the retina (By similarity).</text>
</comment>
<comment type="subunit">
    <text evidence="1 4 5">Efficient DNA binding requires dimerization with another bHLH protein (By similarity). Forms a heterodimer with the bHLH protein hes2, and weakly interacts with hey1/hrt1.</text>
</comment>
<comment type="subcellular location">
    <subcellularLocation>
        <location evidence="2">Nucleus</location>
    </subcellularLocation>
</comment>
<comment type="tissue specificity">
    <text evidence="6">First expressed weakly at stage 12 in primary neuronal precursors. At stages 18 and 21, strongly expressed in the cranial ganglions, with weaker expression remaining in the spinal cord. Later, strongly expressed at sites of neuronal differentiation, namely the eye, forebrain and cranial ganglions.</text>
</comment>
<comment type="PTM">
    <text evidence="6">Serine or threonine phosphorylation within the basic region may regulate neurogenic activity.</text>
</comment>
<feature type="chain" id="PRO_0000127392" description="Neurogenic differentiation factor 4">
    <location>
        <begin position="1"/>
        <end position="315"/>
    </location>
</feature>
<feature type="domain" description="bHLH" evidence="2">
    <location>
        <begin position="78"/>
        <end position="130"/>
    </location>
</feature>
<feature type="region of interest" description="Disordered" evidence="3">
    <location>
        <begin position="39"/>
        <end position="71"/>
    </location>
</feature>
<feature type="compositionally biased region" description="Acidic residues" evidence="3">
    <location>
        <begin position="44"/>
        <end position="55"/>
    </location>
</feature>
<feature type="compositionally biased region" description="Basic residues" evidence="3">
    <location>
        <begin position="58"/>
        <end position="70"/>
    </location>
</feature>
<feature type="modified residue" description="Phosphoserine" evidence="7">
    <location>
        <position position="89"/>
    </location>
</feature>
<feature type="mutagenesis site" description="Mimics a phosphorylated residue. Retains a general neurogenic activity but severely impairs anterior marker-inducing abilities." evidence="6">
    <original>S</original>
    <variation>D</variation>
    <location>
        <position position="89"/>
    </location>
</feature>
<feature type="mutagenesis site" description="Retains ability to induce both general and anterior neural markers." evidence="6">
    <original>S</original>
    <variation>N</variation>
    <location>
        <position position="89"/>
    </location>
</feature>
<gene>
    <name type="primary">neurod4</name>
    <name type="synonym">ath3</name>
    <name type="synonym">atoh3</name>
</gene>
<organism>
    <name type="scientific">Xenopus laevis</name>
    <name type="common">African clawed frog</name>
    <dbReference type="NCBI Taxonomy" id="8355"/>
    <lineage>
        <taxon>Eukaryota</taxon>
        <taxon>Metazoa</taxon>
        <taxon>Chordata</taxon>
        <taxon>Craniata</taxon>
        <taxon>Vertebrata</taxon>
        <taxon>Euteleostomi</taxon>
        <taxon>Amphibia</taxon>
        <taxon>Batrachia</taxon>
        <taxon>Anura</taxon>
        <taxon>Pipoidea</taxon>
        <taxon>Pipidae</taxon>
        <taxon>Xenopodinae</taxon>
        <taxon>Xenopus</taxon>
        <taxon>Xenopus</taxon>
    </lineage>
</organism>
<evidence type="ECO:0000250" key="1"/>
<evidence type="ECO:0000255" key="2">
    <source>
        <dbReference type="PROSITE-ProRule" id="PRU00981"/>
    </source>
</evidence>
<evidence type="ECO:0000256" key="3">
    <source>
        <dbReference type="SAM" id="MobiDB-lite"/>
    </source>
</evidence>
<evidence type="ECO:0000269" key="4">
    <source>
    </source>
</evidence>
<evidence type="ECO:0000269" key="5">
    <source>
    </source>
</evidence>
<evidence type="ECO:0000269" key="6">
    <source>
    </source>
</evidence>
<evidence type="ECO:0000305" key="7">
    <source>
    </source>
</evidence>
<dbReference type="EMBL" id="D85188">
    <property type="protein sequence ID" value="BAA12738.1"/>
    <property type="molecule type" value="mRNA"/>
</dbReference>
<dbReference type="RefSeq" id="NP_001081213.1">
    <property type="nucleotide sequence ID" value="NM_001087744.1"/>
</dbReference>
<dbReference type="SMR" id="P79920"/>
<dbReference type="iPTMnet" id="P79920"/>
<dbReference type="GeneID" id="397714"/>
<dbReference type="KEGG" id="xla:397714"/>
<dbReference type="AGR" id="Xenbase:XB-GENE-972708"/>
<dbReference type="CTD" id="397714"/>
<dbReference type="Xenbase" id="XB-GENE-972708">
    <property type="gene designation" value="neurod4.L"/>
</dbReference>
<dbReference type="OrthoDB" id="10039134at2759"/>
<dbReference type="Proteomes" id="UP000186698">
    <property type="component" value="Chromosome 2L"/>
</dbReference>
<dbReference type="Bgee" id="397714">
    <property type="expression patterns" value="Expressed in camera-type eye and 1 other cell type or tissue"/>
</dbReference>
<dbReference type="GO" id="GO:0005634">
    <property type="term" value="C:nucleus"/>
    <property type="evidence" value="ECO:0000318"/>
    <property type="project" value="GO_Central"/>
</dbReference>
<dbReference type="GO" id="GO:0000981">
    <property type="term" value="F:DNA-binding transcription factor activity, RNA polymerase II-specific"/>
    <property type="evidence" value="ECO:0000318"/>
    <property type="project" value="GO_Central"/>
</dbReference>
<dbReference type="GO" id="GO:0070888">
    <property type="term" value="F:E-box binding"/>
    <property type="evidence" value="ECO:0000318"/>
    <property type="project" value="GO_Central"/>
</dbReference>
<dbReference type="GO" id="GO:0046982">
    <property type="term" value="F:protein heterodimerization activity"/>
    <property type="evidence" value="ECO:0000353"/>
    <property type="project" value="UniProtKB"/>
</dbReference>
<dbReference type="GO" id="GO:0035881">
    <property type="term" value="P:amacrine cell differentiation"/>
    <property type="evidence" value="ECO:0000250"/>
    <property type="project" value="UniProtKB"/>
</dbReference>
<dbReference type="GO" id="GO:0061564">
    <property type="term" value="P:axon development"/>
    <property type="evidence" value="ECO:0000318"/>
    <property type="project" value="GO_Central"/>
</dbReference>
<dbReference type="GO" id="GO:0043010">
    <property type="term" value="P:camera-type eye development"/>
    <property type="evidence" value="ECO:0000318"/>
    <property type="project" value="GO_Central"/>
</dbReference>
<dbReference type="GO" id="GO:0045597">
    <property type="term" value="P:positive regulation of cell differentiation"/>
    <property type="evidence" value="ECO:0000250"/>
    <property type="project" value="UniProtKB"/>
</dbReference>
<dbReference type="GO" id="GO:0045944">
    <property type="term" value="P:positive regulation of transcription by RNA polymerase II"/>
    <property type="evidence" value="ECO:0000318"/>
    <property type="project" value="GO_Central"/>
</dbReference>
<dbReference type="FunFam" id="4.10.280.10:FF:000006">
    <property type="entry name" value="Neurogenic differentiation factor"/>
    <property type="match status" value="1"/>
</dbReference>
<dbReference type="Gene3D" id="4.10.280.10">
    <property type="entry name" value="Helix-loop-helix DNA-binding domain"/>
    <property type="match status" value="1"/>
</dbReference>
<dbReference type="InterPro" id="IPR011598">
    <property type="entry name" value="bHLH_dom"/>
</dbReference>
<dbReference type="InterPro" id="IPR050359">
    <property type="entry name" value="bHLH_transcription_factors"/>
</dbReference>
<dbReference type="InterPro" id="IPR036638">
    <property type="entry name" value="HLH_DNA-bd_sf"/>
</dbReference>
<dbReference type="InterPro" id="IPR022575">
    <property type="entry name" value="NeuroD_DUF"/>
</dbReference>
<dbReference type="InterPro" id="IPR016637">
    <property type="entry name" value="TF_bHLH_NeuroD"/>
</dbReference>
<dbReference type="PANTHER" id="PTHR19290">
    <property type="entry name" value="BASIC HELIX-LOOP-HELIX PROTEIN NEUROGENIN-RELATED"/>
    <property type="match status" value="1"/>
</dbReference>
<dbReference type="PANTHER" id="PTHR19290:SF86">
    <property type="entry name" value="NEUROGENIC DIFFERENTIATION FACTOR 4"/>
    <property type="match status" value="1"/>
</dbReference>
<dbReference type="Pfam" id="PF00010">
    <property type="entry name" value="HLH"/>
    <property type="match status" value="1"/>
</dbReference>
<dbReference type="Pfam" id="PF12533">
    <property type="entry name" value="Neuro_bHLH"/>
    <property type="match status" value="1"/>
</dbReference>
<dbReference type="PIRSF" id="PIRSF015618">
    <property type="entry name" value="bHLH_NeuroD"/>
    <property type="match status" value="1"/>
</dbReference>
<dbReference type="SMART" id="SM00353">
    <property type="entry name" value="HLH"/>
    <property type="match status" value="1"/>
</dbReference>
<dbReference type="SUPFAM" id="SSF47459">
    <property type="entry name" value="HLH, helix-loop-helix DNA-binding domain"/>
    <property type="match status" value="1"/>
</dbReference>
<dbReference type="PROSITE" id="PS50888">
    <property type="entry name" value="BHLH"/>
    <property type="match status" value="1"/>
</dbReference>
<accession>P79920</accession>
<keyword id="KW-0010">Activator</keyword>
<keyword id="KW-0217">Developmental protein</keyword>
<keyword id="KW-0221">Differentiation</keyword>
<keyword id="KW-0238">DNA-binding</keyword>
<keyword id="KW-0524">Neurogenesis</keyword>
<keyword id="KW-0539">Nucleus</keyword>
<keyword id="KW-0597">Phosphoprotein</keyword>
<keyword id="KW-1185">Reference proteome</keyword>
<keyword id="KW-0804">Transcription</keyword>
<keyword id="KW-0805">Transcription regulation</keyword>
<reference key="1">
    <citation type="journal article" date="1997" name="EMBO J.">
        <title>Conversion of ectoderm into a neural fate by ATH-3, a vertebrate basic helix-loop-helix gene homologous to Drosophila proneural gene atonal.</title>
        <authorList>
            <person name="Takebayashi K."/>
            <person name="Takahashi S."/>
            <person name="Yokota C."/>
            <person name="Tsuda H."/>
            <person name="Nakanishi S."/>
            <person name="Asashima M."/>
            <person name="Kageyama R."/>
        </authorList>
    </citation>
    <scope>NUCLEOTIDE SEQUENCE [MRNA]</scope>
    <scope>FUNCTION</scope>
    <scope>TISSUE SPECIFICITY</scope>
    <scope>MUTAGENESIS OF SER-89</scope>
    <scope>PHOSPHORYLATION AT SER-89</scope>
    <source>
        <tissue>Embryo</tissue>
    </source>
</reference>
<reference key="2">
    <citation type="journal article" date="2004" name="Dev. Biol.">
        <title>Sequences downstream of the bHLH domain of the Xenopus hairy-related transcription factor-1 act as an extended dimerization domain that contributes to the selection of the partners.</title>
        <authorList>
            <person name="Taelman V."/>
            <person name="Van Wayenbergh R."/>
            <person name="Soelter M."/>
            <person name="Pichon B."/>
            <person name="Pieler T."/>
            <person name="Christophe D."/>
            <person name="Bellefroid E.J."/>
        </authorList>
    </citation>
    <scope>INTERACTION WITH HEY1</scope>
</reference>
<reference key="3">
    <citation type="journal article" date="2006" name="Development">
        <title>Characterization and function of the bHLH-O protein XHes2: insight into the mechanisms controlling retinal cell fate decision.</title>
        <authorList>
            <person name="Soelter M."/>
            <person name="Locker M."/>
            <person name="Boy S."/>
            <person name="Taelman V."/>
            <person name="Bellefroid E.J."/>
            <person name="Perron M."/>
            <person name="Pieler T."/>
        </authorList>
    </citation>
    <scope>INTERACTION WITH HES2</scope>
</reference>
<proteinExistence type="evidence at protein level"/>
<protein>
    <recommendedName>
        <fullName>Neurogenic differentiation factor 4</fullName>
        <shortName>NeuroD4</shortName>
    </recommendedName>
    <alternativeName>
        <fullName>Helix-loop-helix protein xATH-3</fullName>
        <shortName>xATH3</shortName>
    </alternativeName>
    <alternativeName>
        <fullName>Protein atonal homolog 3</fullName>
    </alternativeName>
</protein>
<name>NDF4_XENLA</name>